<keyword id="KW-0256">Endoplasmic reticulum</keyword>
<keyword id="KW-0349">Heme</keyword>
<keyword id="KW-0408">Iron</keyword>
<keyword id="KW-0472">Membrane</keyword>
<keyword id="KW-0479">Metal-binding</keyword>
<keyword id="KW-0492">Microsome</keyword>
<keyword id="KW-0503">Monooxygenase</keyword>
<keyword id="KW-0560">Oxidoreductase</keyword>
<keyword id="KW-1185">Reference proteome</keyword>
<accession>Q9V4I1</accession>
<accession>Q24123</accession>
<reference key="1">
    <citation type="journal article" date="2000" name="Science">
        <title>The genome sequence of Drosophila melanogaster.</title>
        <authorList>
            <person name="Adams M.D."/>
            <person name="Celniker S.E."/>
            <person name="Holt R.A."/>
            <person name="Evans C.A."/>
            <person name="Gocayne J.D."/>
            <person name="Amanatides P.G."/>
            <person name="Scherer S.E."/>
            <person name="Li P.W."/>
            <person name="Hoskins R.A."/>
            <person name="Galle R.F."/>
            <person name="George R.A."/>
            <person name="Lewis S.E."/>
            <person name="Richards S."/>
            <person name="Ashburner M."/>
            <person name="Henderson S.N."/>
            <person name="Sutton G.G."/>
            <person name="Wortman J.R."/>
            <person name="Yandell M.D."/>
            <person name="Zhang Q."/>
            <person name="Chen L.X."/>
            <person name="Brandon R.C."/>
            <person name="Rogers Y.-H.C."/>
            <person name="Blazej R.G."/>
            <person name="Champe M."/>
            <person name="Pfeiffer B.D."/>
            <person name="Wan K.H."/>
            <person name="Doyle C."/>
            <person name="Baxter E.G."/>
            <person name="Helt G."/>
            <person name="Nelson C.R."/>
            <person name="Miklos G.L.G."/>
            <person name="Abril J.F."/>
            <person name="Agbayani A."/>
            <person name="An H.-J."/>
            <person name="Andrews-Pfannkoch C."/>
            <person name="Baldwin D."/>
            <person name="Ballew R.M."/>
            <person name="Basu A."/>
            <person name="Baxendale J."/>
            <person name="Bayraktaroglu L."/>
            <person name="Beasley E.M."/>
            <person name="Beeson K.Y."/>
            <person name="Benos P.V."/>
            <person name="Berman B.P."/>
            <person name="Bhandari D."/>
            <person name="Bolshakov S."/>
            <person name="Borkova D."/>
            <person name="Botchan M.R."/>
            <person name="Bouck J."/>
            <person name="Brokstein P."/>
            <person name="Brottier P."/>
            <person name="Burtis K.C."/>
            <person name="Busam D.A."/>
            <person name="Butler H."/>
            <person name="Cadieu E."/>
            <person name="Center A."/>
            <person name="Chandra I."/>
            <person name="Cherry J.M."/>
            <person name="Cawley S."/>
            <person name="Dahlke C."/>
            <person name="Davenport L.B."/>
            <person name="Davies P."/>
            <person name="de Pablos B."/>
            <person name="Delcher A."/>
            <person name="Deng Z."/>
            <person name="Mays A.D."/>
            <person name="Dew I."/>
            <person name="Dietz S.M."/>
            <person name="Dodson K."/>
            <person name="Doup L.E."/>
            <person name="Downes M."/>
            <person name="Dugan-Rocha S."/>
            <person name="Dunkov B.C."/>
            <person name="Dunn P."/>
            <person name="Durbin K.J."/>
            <person name="Evangelista C.C."/>
            <person name="Ferraz C."/>
            <person name="Ferriera S."/>
            <person name="Fleischmann W."/>
            <person name="Fosler C."/>
            <person name="Gabrielian A.E."/>
            <person name="Garg N.S."/>
            <person name="Gelbart W.M."/>
            <person name="Glasser K."/>
            <person name="Glodek A."/>
            <person name="Gong F."/>
            <person name="Gorrell J.H."/>
            <person name="Gu Z."/>
            <person name="Guan P."/>
            <person name="Harris M."/>
            <person name="Harris N.L."/>
            <person name="Harvey D.A."/>
            <person name="Heiman T.J."/>
            <person name="Hernandez J.R."/>
            <person name="Houck J."/>
            <person name="Hostin D."/>
            <person name="Houston K.A."/>
            <person name="Howland T.J."/>
            <person name="Wei M.-H."/>
            <person name="Ibegwam C."/>
            <person name="Jalali M."/>
            <person name="Kalush F."/>
            <person name="Karpen G.H."/>
            <person name="Ke Z."/>
            <person name="Kennison J.A."/>
            <person name="Ketchum K.A."/>
            <person name="Kimmel B.E."/>
            <person name="Kodira C.D."/>
            <person name="Kraft C.L."/>
            <person name="Kravitz S."/>
            <person name="Kulp D."/>
            <person name="Lai Z."/>
            <person name="Lasko P."/>
            <person name="Lei Y."/>
            <person name="Levitsky A.A."/>
            <person name="Li J.H."/>
            <person name="Li Z."/>
            <person name="Liang Y."/>
            <person name="Lin X."/>
            <person name="Liu X."/>
            <person name="Mattei B."/>
            <person name="McIntosh T.C."/>
            <person name="McLeod M.P."/>
            <person name="McPherson D."/>
            <person name="Merkulov G."/>
            <person name="Milshina N.V."/>
            <person name="Mobarry C."/>
            <person name="Morris J."/>
            <person name="Moshrefi A."/>
            <person name="Mount S.M."/>
            <person name="Moy M."/>
            <person name="Murphy B."/>
            <person name="Murphy L."/>
            <person name="Muzny D.M."/>
            <person name="Nelson D.L."/>
            <person name="Nelson D.R."/>
            <person name="Nelson K.A."/>
            <person name="Nixon K."/>
            <person name="Nusskern D.R."/>
            <person name="Pacleb J.M."/>
            <person name="Palazzolo M."/>
            <person name="Pittman G.S."/>
            <person name="Pan S."/>
            <person name="Pollard J."/>
            <person name="Puri V."/>
            <person name="Reese M.G."/>
            <person name="Reinert K."/>
            <person name="Remington K."/>
            <person name="Saunders R.D.C."/>
            <person name="Scheeler F."/>
            <person name="Shen H."/>
            <person name="Shue B.C."/>
            <person name="Siden-Kiamos I."/>
            <person name="Simpson M."/>
            <person name="Skupski M.P."/>
            <person name="Smith T.J."/>
            <person name="Spier E."/>
            <person name="Spradling A.C."/>
            <person name="Stapleton M."/>
            <person name="Strong R."/>
            <person name="Sun E."/>
            <person name="Svirskas R."/>
            <person name="Tector C."/>
            <person name="Turner R."/>
            <person name="Venter E."/>
            <person name="Wang A.H."/>
            <person name="Wang X."/>
            <person name="Wang Z.-Y."/>
            <person name="Wassarman D.A."/>
            <person name="Weinstock G.M."/>
            <person name="Weissenbach J."/>
            <person name="Williams S.M."/>
            <person name="Woodage T."/>
            <person name="Worley K.C."/>
            <person name="Wu D."/>
            <person name="Yang S."/>
            <person name="Yao Q.A."/>
            <person name="Ye J."/>
            <person name="Yeh R.-F."/>
            <person name="Zaveri J.S."/>
            <person name="Zhan M."/>
            <person name="Zhang G."/>
            <person name="Zhao Q."/>
            <person name="Zheng L."/>
            <person name="Zheng X.H."/>
            <person name="Zhong F.N."/>
            <person name="Zhong W."/>
            <person name="Zhou X."/>
            <person name="Zhu S.C."/>
            <person name="Zhu X."/>
            <person name="Smith H.O."/>
            <person name="Gibbs R.A."/>
            <person name="Myers E.W."/>
            <person name="Rubin G.M."/>
            <person name="Venter J.C."/>
        </authorList>
    </citation>
    <scope>NUCLEOTIDE SEQUENCE [LARGE SCALE GENOMIC DNA]</scope>
    <source>
        <strain>Berkeley</strain>
    </source>
</reference>
<reference key="2">
    <citation type="journal article" date="2002" name="Genome Biol.">
        <title>Annotation of the Drosophila melanogaster euchromatic genome: a systematic review.</title>
        <authorList>
            <person name="Misra S."/>
            <person name="Crosby M.A."/>
            <person name="Mungall C.J."/>
            <person name="Matthews B.B."/>
            <person name="Campbell K.S."/>
            <person name="Hradecky P."/>
            <person name="Huang Y."/>
            <person name="Kaminker J.S."/>
            <person name="Millburn G.H."/>
            <person name="Prochnik S.E."/>
            <person name="Smith C.D."/>
            <person name="Tupy J.L."/>
            <person name="Whitfield E.J."/>
            <person name="Bayraktaroglu L."/>
            <person name="Berman B.P."/>
            <person name="Bettencourt B.R."/>
            <person name="Celniker S.E."/>
            <person name="de Grey A.D.N.J."/>
            <person name="Drysdale R.A."/>
            <person name="Harris N.L."/>
            <person name="Richter J."/>
            <person name="Russo S."/>
            <person name="Schroeder A.J."/>
            <person name="Shu S.Q."/>
            <person name="Stapleton M."/>
            <person name="Yamada C."/>
            <person name="Ashburner M."/>
            <person name="Gelbart W.M."/>
            <person name="Rubin G.M."/>
            <person name="Lewis S.E."/>
        </authorList>
    </citation>
    <scope>GENOME REANNOTATION</scope>
    <source>
        <strain>Berkeley</strain>
    </source>
</reference>
<reference key="3">
    <citation type="journal article" date="2002" name="Genome Biol.">
        <title>A Drosophila full-length cDNA resource.</title>
        <authorList>
            <person name="Stapleton M."/>
            <person name="Carlson J.W."/>
            <person name="Brokstein P."/>
            <person name="Yu C."/>
            <person name="Champe M."/>
            <person name="George R.A."/>
            <person name="Guarin H."/>
            <person name="Kronmiller B."/>
            <person name="Pacleb J.M."/>
            <person name="Park S."/>
            <person name="Wan K.H."/>
            <person name="Rubin G.M."/>
            <person name="Celniker S.E."/>
        </authorList>
    </citation>
    <scope>NUCLEOTIDE SEQUENCE [LARGE SCALE MRNA]</scope>
    <source>
        <strain>Berkeley</strain>
        <tissue>Head</tissue>
    </source>
</reference>
<reference key="4">
    <citation type="journal article" date="1996" name="Mol. Gen. Genet.">
        <title>Cytochrome P450 gene clusters in Drosophila melanogaster.</title>
        <authorList>
            <person name="Dunkov B.C."/>
            <person name="Rodriguez-Arnaiz R."/>
            <person name="Pittendrigh B."/>
            <person name="ffrench-Constant R.H."/>
            <person name="Feyereisen R."/>
        </authorList>
    </citation>
    <scope>NUCLEOTIDE SEQUENCE OF 326-444</scope>
    <source>
        <strain>Hikone-R</strain>
    </source>
</reference>
<sequence>MALIEICLALVVIGYLIYKWSTATFKTFEERKLYFEKPYPFVGNMAAAALQKSSFQRQLTEFYERTRQHKLVGFFNMRTPMITLNDPELIKKVCVKDFDHFPNHQPFITSNDRLFNDMLSVMRDQRWKHMRNTLTPVFTAAKMRNMFTLMNESFAECLQHLDSSSKTLPGRKGFEVDMKVMCNKLSNDIIATTAFGLKVNSYDNPKNEFYEIGQSLVFSRGLQFFKFMLSTLVPKLFSLLKLTIFDSAKVDYFARLVVEAMQYREKHNITRPDMIQLLMEAKNESEDKWTDDEIVAQCFIFFFAAFENNSNLICTTTYELLYNPDVQERLYEEIVETKKALNGAPLTYDAVQKMTYMDMVISESLRKWTLAAATDRLCSKDYTLTDDDGTKLFDFKVGDRINIPISGLHLDDRYFPEPRKFDPDRFSEERKGDMVPYTYLPFGVGPRNCIGNRYALMQVKGMLFNLLLHYKIEASPRTIKDLWGSASGFNFTPRSGFWMHLVPRK</sequence>
<evidence type="ECO:0000250" key="1"/>
<evidence type="ECO:0000305" key="2"/>
<dbReference type="EC" id="1.14.-.-"/>
<dbReference type="EMBL" id="AE013599">
    <property type="protein sequence ID" value="AAF59290.1"/>
    <property type="molecule type" value="Genomic_DNA"/>
</dbReference>
<dbReference type="EMBL" id="AY059439">
    <property type="protein sequence ID" value="AAL13345.1"/>
    <property type="molecule type" value="mRNA"/>
</dbReference>
<dbReference type="EMBL" id="U34325">
    <property type="protein sequence ID" value="AAA80659.1"/>
    <property type="molecule type" value="mRNA"/>
</dbReference>
<dbReference type="RefSeq" id="NP_523646.1">
    <property type="nucleotide sequence ID" value="NM_078922.4"/>
</dbReference>
<dbReference type="SMR" id="Q9V4I1"/>
<dbReference type="BioGRID" id="61523">
    <property type="interactions" value="2"/>
</dbReference>
<dbReference type="DIP" id="DIP-21256N"/>
<dbReference type="FunCoup" id="Q9V4I1">
    <property type="interactions" value="52"/>
</dbReference>
<dbReference type="IntAct" id="Q9V4I1">
    <property type="interactions" value="2"/>
</dbReference>
<dbReference type="STRING" id="7227.FBpp0088126"/>
<dbReference type="PaxDb" id="7227-FBpp0088126"/>
<dbReference type="DNASU" id="35635"/>
<dbReference type="EnsemblMetazoa" id="FBtr0089055">
    <property type="protein sequence ID" value="FBpp0088126"/>
    <property type="gene ID" value="FBgn0015039"/>
</dbReference>
<dbReference type="GeneID" id="35635"/>
<dbReference type="KEGG" id="dme:Dmel_CG4486"/>
<dbReference type="AGR" id="FB:FBgn0015039"/>
<dbReference type="CTD" id="35635"/>
<dbReference type="FlyBase" id="FBgn0015039">
    <property type="gene designation" value="Cyp9b2"/>
</dbReference>
<dbReference type="VEuPathDB" id="VectorBase:FBgn0015039"/>
<dbReference type="eggNOG" id="KOG0158">
    <property type="taxonomic scope" value="Eukaryota"/>
</dbReference>
<dbReference type="GeneTree" id="ENSGT00940000165057"/>
<dbReference type="HOGENOM" id="CLU_001570_5_2_1"/>
<dbReference type="InParanoid" id="Q9V4I1"/>
<dbReference type="OMA" id="MVPYTYL"/>
<dbReference type="OrthoDB" id="2789670at2759"/>
<dbReference type="PhylomeDB" id="Q9V4I1"/>
<dbReference type="BioGRID-ORCS" id="35635">
    <property type="hits" value="0 hits in 3 CRISPR screens"/>
</dbReference>
<dbReference type="ChiTaRS" id="Cyp9b2">
    <property type="organism name" value="fly"/>
</dbReference>
<dbReference type="GenomeRNAi" id="35635"/>
<dbReference type="PRO" id="PR:Q9V4I1"/>
<dbReference type="Proteomes" id="UP000000803">
    <property type="component" value="Chromosome 2R"/>
</dbReference>
<dbReference type="Bgee" id="FBgn0015039">
    <property type="expression patterns" value="Expressed in crop (Drosophila) and 124 other cell types or tissues"/>
</dbReference>
<dbReference type="GO" id="GO:0005789">
    <property type="term" value="C:endoplasmic reticulum membrane"/>
    <property type="evidence" value="ECO:0007669"/>
    <property type="project" value="UniProtKB-SubCell"/>
</dbReference>
<dbReference type="GO" id="GO:0020037">
    <property type="term" value="F:heme binding"/>
    <property type="evidence" value="ECO:0007669"/>
    <property type="project" value="InterPro"/>
</dbReference>
<dbReference type="GO" id="GO:0005506">
    <property type="term" value="F:iron ion binding"/>
    <property type="evidence" value="ECO:0007669"/>
    <property type="project" value="InterPro"/>
</dbReference>
<dbReference type="GO" id="GO:0004497">
    <property type="term" value="F:monooxygenase activity"/>
    <property type="evidence" value="ECO:0007669"/>
    <property type="project" value="UniProtKB-KW"/>
</dbReference>
<dbReference type="GO" id="GO:0016705">
    <property type="term" value="F:oxidoreductase activity, acting on paired donors, with incorporation or reduction of molecular oxygen"/>
    <property type="evidence" value="ECO:0007669"/>
    <property type="project" value="InterPro"/>
</dbReference>
<dbReference type="CDD" id="cd11056">
    <property type="entry name" value="CYP6-like"/>
    <property type="match status" value="1"/>
</dbReference>
<dbReference type="FunFam" id="1.10.630.10:FF:000042">
    <property type="entry name" value="Cytochrome P450"/>
    <property type="match status" value="1"/>
</dbReference>
<dbReference type="Gene3D" id="1.10.630.10">
    <property type="entry name" value="Cytochrome P450"/>
    <property type="match status" value="1"/>
</dbReference>
<dbReference type="InterPro" id="IPR001128">
    <property type="entry name" value="Cyt_P450"/>
</dbReference>
<dbReference type="InterPro" id="IPR017972">
    <property type="entry name" value="Cyt_P450_CS"/>
</dbReference>
<dbReference type="InterPro" id="IPR002403">
    <property type="entry name" value="Cyt_P450_E_grp-IV"/>
</dbReference>
<dbReference type="InterPro" id="IPR036396">
    <property type="entry name" value="Cyt_P450_sf"/>
</dbReference>
<dbReference type="InterPro" id="IPR050476">
    <property type="entry name" value="Insect_CytP450_Detox"/>
</dbReference>
<dbReference type="PANTHER" id="PTHR24292:SF54">
    <property type="entry name" value="CYP9F3-RELATED"/>
    <property type="match status" value="1"/>
</dbReference>
<dbReference type="PANTHER" id="PTHR24292">
    <property type="entry name" value="CYTOCHROME P450"/>
    <property type="match status" value="1"/>
</dbReference>
<dbReference type="Pfam" id="PF00067">
    <property type="entry name" value="p450"/>
    <property type="match status" value="1"/>
</dbReference>
<dbReference type="PRINTS" id="PR00465">
    <property type="entry name" value="EP450IV"/>
</dbReference>
<dbReference type="PRINTS" id="PR00385">
    <property type="entry name" value="P450"/>
</dbReference>
<dbReference type="SUPFAM" id="SSF48264">
    <property type="entry name" value="Cytochrome P450"/>
    <property type="match status" value="1"/>
</dbReference>
<dbReference type="PROSITE" id="PS00086">
    <property type="entry name" value="CYTOCHROME_P450"/>
    <property type="match status" value="1"/>
</dbReference>
<feature type="chain" id="PRO_0000051917" description="Cytochrome P450 9b2">
    <location>
        <begin position="1"/>
        <end position="505"/>
    </location>
</feature>
<feature type="binding site" description="axial binding residue" evidence="1">
    <location>
        <position position="449"/>
    </location>
    <ligand>
        <name>heme</name>
        <dbReference type="ChEBI" id="CHEBI:30413"/>
    </ligand>
    <ligandPart>
        <name>Fe</name>
        <dbReference type="ChEBI" id="CHEBI:18248"/>
    </ligandPart>
</feature>
<protein>
    <recommendedName>
        <fullName>Cytochrome P450 9b2</fullName>
        <ecNumber>1.14.-.-</ecNumber>
    </recommendedName>
    <alternativeName>
        <fullName>CYPIXB2</fullName>
    </alternativeName>
</protein>
<name>CP9B2_DROME</name>
<gene>
    <name type="primary">Cyp9b2</name>
    <name type="ORF">CG4486</name>
</gene>
<comment type="function">
    <text evidence="1">May be involved in the metabolism of insect hormones and in the breakdown of synthetic insecticides.</text>
</comment>
<comment type="cofactor">
    <cofactor evidence="1">
        <name>heme</name>
        <dbReference type="ChEBI" id="CHEBI:30413"/>
    </cofactor>
</comment>
<comment type="subcellular location">
    <subcellularLocation>
        <location evidence="2">Endoplasmic reticulum membrane</location>
        <topology evidence="2">Peripheral membrane protein</topology>
    </subcellularLocation>
    <subcellularLocation>
        <location evidence="2">Microsome membrane</location>
        <topology evidence="2">Peripheral membrane protein</topology>
    </subcellularLocation>
</comment>
<comment type="similarity">
    <text evidence="2">Belongs to the cytochrome P450 family.</text>
</comment>
<proteinExistence type="evidence at transcript level"/>
<organism>
    <name type="scientific">Drosophila melanogaster</name>
    <name type="common">Fruit fly</name>
    <dbReference type="NCBI Taxonomy" id="7227"/>
    <lineage>
        <taxon>Eukaryota</taxon>
        <taxon>Metazoa</taxon>
        <taxon>Ecdysozoa</taxon>
        <taxon>Arthropoda</taxon>
        <taxon>Hexapoda</taxon>
        <taxon>Insecta</taxon>
        <taxon>Pterygota</taxon>
        <taxon>Neoptera</taxon>
        <taxon>Endopterygota</taxon>
        <taxon>Diptera</taxon>
        <taxon>Brachycera</taxon>
        <taxon>Muscomorpha</taxon>
        <taxon>Ephydroidea</taxon>
        <taxon>Drosophilidae</taxon>
        <taxon>Drosophila</taxon>
        <taxon>Sophophora</taxon>
    </lineage>
</organism>